<name>PNP_RHOJR</name>
<proteinExistence type="inferred from homology"/>
<reference key="1">
    <citation type="journal article" date="2006" name="Proc. Natl. Acad. Sci. U.S.A.">
        <title>The complete genome of Rhodococcus sp. RHA1 provides insights into a catabolic powerhouse.</title>
        <authorList>
            <person name="McLeod M.P."/>
            <person name="Warren R.L."/>
            <person name="Hsiao W.W.L."/>
            <person name="Araki N."/>
            <person name="Myhre M."/>
            <person name="Fernandes C."/>
            <person name="Miyazawa D."/>
            <person name="Wong W."/>
            <person name="Lillquist A.L."/>
            <person name="Wang D."/>
            <person name="Dosanjh M."/>
            <person name="Hara H."/>
            <person name="Petrescu A."/>
            <person name="Morin R.D."/>
            <person name="Yang G."/>
            <person name="Stott J.M."/>
            <person name="Schein J.E."/>
            <person name="Shin H."/>
            <person name="Smailus D."/>
            <person name="Siddiqui A.S."/>
            <person name="Marra M.A."/>
            <person name="Jones S.J.M."/>
            <person name="Holt R."/>
            <person name="Brinkman F.S.L."/>
            <person name="Miyauchi K."/>
            <person name="Fukuda M."/>
            <person name="Davies J.E."/>
            <person name="Mohn W.W."/>
            <person name="Eltis L.D."/>
        </authorList>
    </citation>
    <scope>NUCLEOTIDE SEQUENCE [LARGE SCALE GENOMIC DNA]</scope>
    <source>
        <strain>RHA1</strain>
    </source>
</reference>
<feature type="chain" id="PRO_0000329806" description="Polyribonucleotide nucleotidyltransferase">
    <location>
        <begin position="1"/>
        <end position="757"/>
    </location>
</feature>
<feature type="domain" description="KH" evidence="1">
    <location>
        <begin position="598"/>
        <end position="657"/>
    </location>
</feature>
<feature type="domain" description="S1 motif" evidence="1">
    <location>
        <begin position="669"/>
        <end position="738"/>
    </location>
</feature>
<feature type="binding site" evidence="1">
    <location>
        <position position="532"/>
    </location>
    <ligand>
        <name>Mg(2+)</name>
        <dbReference type="ChEBI" id="CHEBI:18420"/>
    </ligand>
</feature>
<feature type="binding site" evidence="1">
    <location>
        <position position="538"/>
    </location>
    <ligand>
        <name>Mg(2+)</name>
        <dbReference type="ChEBI" id="CHEBI:18420"/>
    </ligand>
</feature>
<organism>
    <name type="scientific">Rhodococcus jostii (strain RHA1)</name>
    <dbReference type="NCBI Taxonomy" id="101510"/>
    <lineage>
        <taxon>Bacteria</taxon>
        <taxon>Bacillati</taxon>
        <taxon>Actinomycetota</taxon>
        <taxon>Actinomycetes</taxon>
        <taxon>Mycobacteriales</taxon>
        <taxon>Nocardiaceae</taxon>
        <taxon>Rhodococcus</taxon>
    </lineage>
</organism>
<accession>Q0S208</accession>
<sequence>MTENSAVEVDEGVFESTAVIDNGSFGTRTIRFETGRLAQQAAGAVVAYLDDETMLLSATSASKHPKEHFDFFPLTVDVEERMYAAGRIPGSFFRREGRPSTDAILTCRLIDRPLRPSFVDGLRNEIQVVVTVMSLNPQDLYDVVAINAASASTQIAGLPFSGPVGGVRVALITSDENKAGQWVAFPTVEQLENAVFDMVVAGRIVSGSGDDADVAIMMVEAEATDNVISLIDGGAQAPTEAIVAEGLEAAKPFIARLCTAQQQLAAKASKPTGDFPVFPAYQDDVFAAVEAAAAEKLSAALTIAGKQERDDKTDEVKVEVLEQVAPNFEGREKELGAAFRSLTKKLVRQRILRDQFRIDGRGITDIRSLSAEVAIVPRAHGSALFERGETQILGVTTLDMVKMAQQVDSLGPETTKRYMHHYNFPPYSTGETGRVGSPKRREIGHGALAERALMPVLPSVEEFPYAIRQVSEALSSNGSTSMGSVCASTLALLNAGVPLKAPVAGIAMGLVSDQVDGETRYVALTDILGAEDAFGDMDFKVAGTKDFVTALQLDTKLDGIPSKVLAGALSQAKDARATILEVMAEAIDTPDEMSPFAPRVTAIKVPVDKIGEVIGPKGKMINSITEQTGANISIEDDGTVFVGATDGPSAQAAIDMINAIANPQLPKVGERFLGTVVKTTAFGAFVSLLPGRDGLVHISKLGSGKRIAKVEDVVSVGSKLRVEIADIDNRGKISLIPVEEDGAAAPAEQSEEAAAEK</sequence>
<keyword id="KW-0963">Cytoplasm</keyword>
<keyword id="KW-0460">Magnesium</keyword>
<keyword id="KW-0479">Metal-binding</keyword>
<keyword id="KW-0548">Nucleotidyltransferase</keyword>
<keyword id="KW-0694">RNA-binding</keyword>
<keyword id="KW-0808">Transferase</keyword>
<protein>
    <recommendedName>
        <fullName evidence="1">Polyribonucleotide nucleotidyltransferase</fullName>
        <ecNumber evidence="1">2.7.7.8</ecNumber>
    </recommendedName>
    <alternativeName>
        <fullName evidence="1">Polynucleotide phosphorylase</fullName>
        <shortName evidence="1">PNPase</shortName>
    </alternativeName>
</protein>
<gene>
    <name evidence="1" type="primary">pnp</name>
    <name type="ordered locus">RHA1_ro06655</name>
</gene>
<evidence type="ECO:0000255" key="1">
    <source>
        <dbReference type="HAMAP-Rule" id="MF_01595"/>
    </source>
</evidence>
<comment type="function">
    <text evidence="1">Involved in mRNA degradation. Catalyzes the phosphorolysis of single-stranded polyribonucleotides processively in the 3'- to 5'-direction.</text>
</comment>
<comment type="catalytic activity">
    <reaction evidence="1">
        <text>RNA(n+1) + phosphate = RNA(n) + a ribonucleoside 5'-diphosphate</text>
        <dbReference type="Rhea" id="RHEA:22096"/>
        <dbReference type="Rhea" id="RHEA-COMP:14527"/>
        <dbReference type="Rhea" id="RHEA-COMP:17342"/>
        <dbReference type="ChEBI" id="CHEBI:43474"/>
        <dbReference type="ChEBI" id="CHEBI:57930"/>
        <dbReference type="ChEBI" id="CHEBI:140395"/>
        <dbReference type="EC" id="2.7.7.8"/>
    </reaction>
</comment>
<comment type="cofactor">
    <cofactor evidence="1">
        <name>Mg(2+)</name>
        <dbReference type="ChEBI" id="CHEBI:18420"/>
    </cofactor>
</comment>
<comment type="subcellular location">
    <subcellularLocation>
        <location evidence="1">Cytoplasm</location>
    </subcellularLocation>
</comment>
<comment type="similarity">
    <text evidence="1">Belongs to the polyribonucleotide nucleotidyltransferase family.</text>
</comment>
<dbReference type="EC" id="2.7.7.8" evidence="1"/>
<dbReference type="EMBL" id="CP000431">
    <property type="protein sequence ID" value="ABG98428.1"/>
    <property type="molecule type" value="Genomic_DNA"/>
</dbReference>
<dbReference type="RefSeq" id="WP_005240683.1">
    <property type="nucleotide sequence ID" value="NC_008268.1"/>
</dbReference>
<dbReference type="SMR" id="Q0S208"/>
<dbReference type="KEGG" id="rha:RHA1_ro06655"/>
<dbReference type="eggNOG" id="COG1185">
    <property type="taxonomic scope" value="Bacteria"/>
</dbReference>
<dbReference type="HOGENOM" id="CLU_004217_2_2_11"/>
<dbReference type="OrthoDB" id="9804305at2"/>
<dbReference type="Proteomes" id="UP000008710">
    <property type="component" value="Chromosome"/>
</dbReference>
<dbReference type="GO" id="GO:0005829">
    <property type="term" value="C:cytosol"/>
    <property type="evidence" value="ECO:0007669"/>
    <property type="project" value="TreeGrafter"/>
</dbReference>
<dbReference type="GO" id="GO:0000175">
    <property type="term" value="F:3'-5'-RNA exonuclease activity"/>
    <property type="evidence" value="ECO:0007669"/>
    <property type="project" value="TreeGrafter"/>
</dbReference>
<dbReference type="GO" id="GO:0000287">
    <property type="term" value="F:magnesium ion binding"/>
    <property type="evidence" value="ECO:0007669"/>
    <property type="project" value="UniProtKB-UniRule"/>
</dbReference>
<dbReference type="GO" id="GO:0004654">
    <property type="term" value="F:polyribonucleotide nucleotidyltransferase activity"/>
    <property type="evidence" value="ECO:0007669"/>
    <property type="project" value="UniProtKB-UniRule"/>
</dbReference>
<dbReference type="GO" id="GO:0003723">
    <property type="term" value="F:RNA binding"/>
    <property type="evidence" value="ECO:0007669"/>
    <property type="project" value="UniProtKB-UniRule"/>
</dbReference>
<dbReference type="GO" id="GO:0006402">
    <property type="term" value="P:mRNA catabolic process"/>
    <property type="evidence" value="ECO:0007669"/>
    <property type="project" value="UniProtKB-UniRule"/>
</dbReference>
<dbReference type="GO" id="GO:0006396">
    <property type="term" value="P:RNA processing"/>
    <property type="evidence" value="ECO:0007669"/>
    <property type="project" value="InterPro"/>
</dbReference>
<dbReference type="CDD" id="cd02393">
    <property type="entry name" value="KH-I_PNPase"/>
    <property type="match status" value="1"/>
</dbReference>
<dbReference type="CDD" id="cd11364">
    <property type="entry name" value="RNase_PH_PNPase_2"/>
    <property type="match status" value="1"/>
</dbReference>
<dbReference type="CDD" id="cd04472">
    <property type="entry name" value="S1_PNPase"/>
    <property type="match status" value="1"/>
</dbReference>
<dbReference type="FunFam" id="2.40.50.140:FF:000069">
    <property type="entry name" value="Polyribonucleotide nucleotidyltransferase"/>
    <property type="match status" value="1"/>
</dbReference>
<dbReference type="FunFam" id="3.30.1370.10:FF:000001">
    <property type="entry name" value="Polyribonucleotide nucleotidyltransferase"/>
    <property type="match status" value="1"/>
</dbReference>
<dbReference type="FunFam" id="3.30.230.70:FF:000001">
    <property type="entry name" value="Polyribonucleotide nucleotidyltransferase"/>
    <property type="match status" value="1"/>
</dbReference>
<dbReference type="FunFam" id="3.30.230.70:FF:000002">
    <property type="entry name" value="Polyribonucleotide nucleotidyltransferase"/>
    <property type="match status" value="1"/>
</dbReference>
<dbReference type="Gene3D" id="3.30.230.70">
    <property type="entry name" value="GHMP Kinase, N-terminal domain"/>
    <property type="match status" value="2"/>
</dbReference>
<dbReference type="Gene3D" id="3.30.1370.10">
    <property type="entry name" value="K Homology domain, type 1"/>
    <property type="match status" value="1"/>
</dbReference>
<dbReference type="Gene3D" id="2.40.50.140">
    <property type="entry name" value="Nucleic acid-binding proteins"/>
    <property type="match status" value="1"/>
</dbReference>
<dbReference type="HAMAP" id="MF_01595">
    <property type="entry name" value="PNPase"/>
    <property type="match status" value="1"/>
</dbReference>
<dbReference type="InterPro" id="IPR001247">
    <property type="entry name" value="ExoRNase_PH_dom1"/>
</dbReference>
<dbReference type="InterPro" id="IPR036345">
    <property type="entry name" value="ExoRNase_PH_dom2_sf"/>
</dbReference>
<dbReference type="InterPro" id="IPR014069">
    <property type="entry name" value="GPSI/PNP"/>
</dbReference>
<dbReference type="InterPro" id="IPR004087">
    <property type="entry name" value="KH_dom"/>
</dbReference>
<dbReference type="InterPro" id="IPR004088">
    <property type="entry name" value="KH_dom_type_1"/>
</dbReference>
<dbReference type="InterPro" id="IPR036612">
    <property type="entry name" value="KH_dom_type_1_sf"/>
</dbReference>
<dbReference type="InterPro" id="IPR012340">
    <property type="entry name" value="NA-bd_OB-fold"/>
</dbReference>
<dbReference type="InterPro" id="IPR012162">
    <property type="entry name" value="PNPase"/>
</dbReference>
<dbReference type="InterPro" id="IPR027408">
    <property type="entry name" value="PNPase/RNase_PH_dom_sf"/>
</dbReference>
<dbReference type="InterPro" id="IPR015848">
    <property type="entry name" value="PNPase_PH_RNA-bd_bac/org-type"/>
</dbReference>
<dbReference type="InterPro" id="IPR036456">
    <property type="entry name" value="PNPase_PH_RNA-bd_sf"/>
</dbReference>
<dbReference type="InterPro" id="IPR020568">
    <property type="entry name" value="Ribosomal_Su5_D2-typ_SF"/>
</dbReference>
<dbReference type="InterPro" id="IPR003029">
    <property type="entry name" value="S1_domain"/>
</dbReference>
<dbReference type="NCBIfam" id="TIGR03591">
    <property type="entry name" value="polynuc_phos"/>
    <property type="match status" value="1"/>
</dbReference>
<dbReference type="NCBIfam" id="TIGR02696">
    <property type="entry name" value="pppGpp_PNP"/>
    <property type="match status" value="1"/>
</dbReference>
<dbReference type="NCBIfam" id="NF008805">
    <property type="entry name" value="PRK11824.1"/>
    <property type="match status" value="1"/>
</dbReference>
<dbReference type="PANTHER" id="PTHR11252">
    <property type="entry name" value="POLYRIBONUCLEOTIDE NUCLEOTIDYLTRANSFERASE"/>
    <property type="match status" value="1"/>
</dbReference>
<dbReference type="PANTHER" id="PTHR11252:SF0">
    <property type="entry name" value="POLYRIBONUCLEOTIDE NUCLEOTIDYLTRANSFERASE 1, MITOCHONDRIAL"/>
    <property type="match status" value="1"/>
</dbReference>
<dbReference type="Pfam" id="PF00013">
    <property type="entry name" value="KH_1"/>
    <property type="match status" value="1"/>
</dbReference>
<dbReference type="Pfam" id="PF03726">
    <property type="entry name" value="PNPase"/>
    <property type="match status" value="1"/>
</dbReference>
<dbReference type="Pfam" id="PF01138">
    <property type="entry name" value="RNase_PH"/>
    <property type="match status" value="2"/>
</dbReference>
<dbReference type="Pfam" id="PF00575">
    <property type="entry name" value="S1"/>
    <property type="match status" value="1"/>
</dbReference>
<dbReference type="PIRSF" id="PIRSF005499">
    <property type="entry name" value="PNPase"/>
    <property type="match status" value="1"/>
</dbReference>
<dbReference type="SMART" id="SM00322">
    <property type="entry name" value="KH"/>
    <property type="match status" value="1"/>
</dbReference>
<dbReference type="SMART" id="SM00316">
    <property type="entry name" value="S1"/>
    <property type="match status" value="1"/>
</dbReference>
<dbReference type="SUPFAM" id="SSF54791">
    <property type="entry name" value="Eukaryotic type KH-domain (KH-domain type I)"/>
    <property type="match status" value="1"/>
</dbReference>
<dbReference type="SUPFAM" id="SSF50249">
    <property type="entry name" value="Nucleic acid-binding proteins"/>
    <property type="match status" value="1"/>
</dbReference>
<dbReference type="SUPFAM" id="SSF46915">
    <property type="entry name" value="Polynucleotide phosphorylase/guanosine pentaphosphate synthase (PNPase/GPSI), domain 3"/>
    <property type="match status" value="1"/>
</dbReference>
<dbReference type="SUPFAM" id="SSF55666">
    <property type="entry name" value="Ribonuclease PH domain 2-like"/>
    <property type="match status" value="2"/>
</dbReference>
<dbReference type="SUPFAM" id="SSF54211">
    <property type="entry name" value="Ribosomal protein S5 domain 2-like"/>
    <property type="match status" value="2"/>
</dbReference>
<dbReference type="PROSITE" id="PS50084">
    <property type="entry name" value="KH_TYPE_1"/>
    <property type="match status" value="1"/>
</dbReference>
<dbReference type="PROSITE" id="PS50126">
    <property type="entry name" value="S1"/>
    <property type="match status" value="1"/>
</dbReference>